<protein>
    <recommendedName>
        <fullName>Twinfilin</fullName>
    </recommendedName>
</protein>
<gene>
    <name type="primary">twfA</name>
    <name type="ORF">DDB_G0274437</name>
</gene>
<name>TWF_DICDI</name>
<proteinExistence type="evidence at protein level"/>
<sequence length="335" mass="37568">MSHSSGIPASQELISAFGSANTGDVRLIKVVIKNDELVVDQKLNVQSDFETDLELAHSVLQKDSPCYILYKKDDKSIELTGYNWIFMFFVPDNAKVREKMTYAATRGNLKRELGASHFVDEIYSSNMNDFSKKGYQQHKLHQESEAPLTMEEQQRNDEKEQGLFVGGGGSGMHVHGISFPVDSDASTAVSNFINKKFNYIELSVNVDDEKIIFSSSSNIDIEAISSKISSTEPSFHFFRYSHQHEGENLDSIIYIYSCPDGSNGTKSAPVRKRMLFSSSKANVEQLVTSHNVKIDLKLEINSPSEISEESIINELHPPKVEEKKAFSKPSRPGRK</sequence>
<accession>Q869T1</accession>
<accession>Q554X8</accession>
<organism>
    <name type="scientific">Dictyostelium discoideum</name>
    <name type="common">Social amoeba</name>
    <dbReference type="NCBI Taxonomy" id="44689"/>
    <lineage>
        <taxon>Eukaryota</taxon>
        <taxon>Amoebozoa</taxon>
        <taxon>Evosea</taxon>
        <taxon>Eumycetozoa</taxon>
        <taxon>Dictyostelia</taxon>
        <taxon>Dictyosteliales</taxon>
        <taxon>Dictyosteliaceae</taxon>
        <taxon>Dictyostelium</taxon>
    </lineage>
</organism>
<evidence type="ECO:0000250" key="1"/>
<evidence type="ECO:0000255" key="2">
    <source>
        <dbReference type="PROSITE-ProRule" id="PRU00599"/>
    </source>
</evidence>
<evidence type="ECO:0000256" key="3">
    <source>
        <dbReference type="SAM" id="MobiDB-lite"/>
    </source>
</evidence>
<evidence type="ECO:0000305" key="4"/>
<dbReference type="EMBL" id="AAFI02000012">
    <property type="protein sequence ID" value="EAL70111.1"/>
    <property type="molecule type" value="Genomic_DNA"/>
</dbReference>
<dbReference type="RefSeq" id="XP_644195.1">
    <property type="nucleotide sequence ID" value="XM_639103.1"/>
</dbReference>
<dbReference type="SMR" id="Q869T1"/>
<dbReference type="FunCoup" id="Q869T1">
    <property type="interactions" value="347"/>
</dbReference>
<dbReference type="STRING" id="44689.Q869T1"/>
<dbReference type="PaxDb" id="44689-DDB0216426"/>
<dbReference type="EnsemblProtists" id="EAL70111">
    <property type="protein sequence ID" value="EAL70111"/>
    <property type="gene ID" value="DDB_G0274437"/>
</dbReference>
<dbReference type="GeneID" id="8619624"/>
<dbReference type="KEGG" id="ddi:DDB_G0274437"/>
<dbReference type="dictyBase" id="DDB_G0274437">
    <property type="gene designation" value="twfA"/>
</dbReference>
<dbReference type="VEuPathDB" id="AmoebaDB:DDB_G0274437"/>
<dbReference type="eggNOG" id="KOG1747">
    <property type="taxonomic scope" value="Eukaryota"/>
</dbReference>
<dbReference type="HOGENOM" id="CLU_031995_0_1_1"/>
<dbReference type="InParanoid" id="Q869T1"/>
<dbReference type="OMA" id="YLFKHTH"/>
<dbReference type="PhylomeDB" id="Q869T1"/>
<dbReference type="Reactome" id="R-DDI-9013418">
    <property type="pathway name" value="RHOBTB2 GTPase cycle"/>
</dbReference>
<dbReference type="PRO" id="PR:Q869T1"/>
<dbReference type="Proteomes" id="UP000002195">
    <property type="component" value="Chromosome 2"/>
</dbReference>
<dbReference type="GO" id="GO:0015629">
    <property type="term" value="C:actin cytoskeleton"/>
    <property type="evidence" value="ECO:0000250"/>
    <property type="project" value="dictyBase"/>
</dbReference>
<dbReference type="GO" id="GO:0005884">
    <property type="term" value="C:actin filament"/>
    <property type="evidence" value="ECO:0000318"/>
    <property type="project" value="GO_Central"/>
</dbReference>
<dbReference type="GO" id="GO:0005938">
    <property type="term" value="C:cell cortex"/>
    <property type="evidence" value="ECO:0007669"/>
    <property type="project" value="UniProtKB-SubCell"/>
</dbReference>
<dbReference type="GO" id="GO:0005737">
    <property type="term" value="C:cytoplasm"/>
    <property type="evidence" value="ECO:0000318"/>
    <property type="project" value="GO_Central"/>
</dbReference>
<dbReference type="GO" id="GO:0051015">
    <property type="term" value="F:actin filament binding"/>
    <property type="evidence" value="ECO:0000318"/>
    <property type="project" value="GO_Central"/>
</dbReference>
<dbReference type="GO" id="GO:0003785">
    <property type="term" value="F:actin monomer binding"/>
    <property type="evidence" value="ECO:0000318"/>
    <property type="project" value="GO_Central"/>
</dbReference>
<dbReference type="GO" id="GO:0004713">
    <property type="term" value="F:protein tyrosine kinase activity"/>
    <property type="evidence" value="ECO:0000250"/>
    <property type="project" value="dictyBase"/>
</dbReference>
<dbReference type="GO" id="GO:0030042">
    <property type="term" value="P:actin filament depolymerization"/>
    <property type="evidence" value="ECO:0000318"/>
    <property type="project" value="GO_Central"/>
</dbReference>
<dbReference type="GO" id="GO:0051016">
    <property type="term" value="P:barbed-end actin filament capping"/>
    <property type="evidence" value="ECO:0000318"/>
    <property type="project" value="GO_Central"/>
</dbReference>
<dbReference type="CDD" id="cd11284">
    <property type="entry name" value="ADF_Twf-C_like"/>
    <property type="match status" value="1"/>
</dbReference>
<dbReference type="CDD" id="cd11285">
    <property type="entry name" value="ADF_Twf-N_like"/>
    <property type="match status" value="1"/>
</dbReference>
<dbReference type="FunFam" id="3.40.20.10:FF:000042">
    <property type="entry name" value="Actin depolymerizing protein"/>
    <property type="match status" value="1"/>
</dbReference>
<dbReference type="FunFam" id="3.40.20.10:FF:000007">
    <property type="entry name" value="Twinfilin-1 isoform 1"/>
    <property type="match status" value="1"/>
</dbReference>
<dbReference type="Gene3D" id="3.40.20.10">
    <property type="entry name" value="Severin"/>
    <property type="match status" value="2"/>
</dbReference>
<dbReference type="InterPro" id="IPR002108">
    <property type="entry name" value="ADF-H"/>
</dbReference>
<dbReference type="InterPro" id="IPR029006">
    <property type="entry name" value="ADF-H/Gelsolin-like_dom_sf"/>
</dbReference>
<dbReference type="InterPro" id="IPR028458">
    <property type="entry name" value="Twinfilin"/>
</dbReference>
<dbReference type="PANTHER" id="PTHR13759">
    <property type="entry name" value="TWINFILIN"/>
    <property type="match status" value="1"/>
</dbReference>
<dbReference type="PANTHER" id="PTHR13759:SF1">
    <property type="entry name" value="TWINFILIN"/>
    <property type="match status" value="1"/>
</dbReference>
<dbReference type="Pfam" id="PF00241">
    <property type="entry name" value="Cofilin_ADF"/>
    <property type="match status" value="2"/>
</dbReference>
<dbReference type="SMART" id="SM00102">
    <property type="entry name" value="ADF"/>
    <property type="match status" value="2"/>
</dbReference>
<dbReference type="SUPFAM" id="SSF55753">
    <property type="entry name" value="Actin depolymerizing proteins"/>
    <property type="match status" value="2"/>
</dbReference>
<dbReference type="PROSITE" id="PS51263">
    <property type="entry name" value="ADF_H"/>
    <property type="match status" value="2"/>
</dbReference>
<keyword id="KW-0009">Actin-binding</keyword>
<keyword id="KW-0963">Cytoplasm</keyword>
<keyword id="KW-0206">Cytoskeleton</keyword>
<keyword id="KW-1185">Reference proteome</keyword>
<keyword id="KW-0677">Repeat</keyword>
<reference key="1">
    <citation type="journal article" date="2002" name="Nature">
        <title>Sequence and analysis of chromosome 2 of Dictyostelium discoideum.</title>
        <authorList>
            <person name="Gloeckner G."/>
            <person name="Eichinger L."/>
            <person name="Szafranski K."/>
            <person name="Pachebat J.A."/>
            <person name="Bankier A.T."/>
            <person name="Dear P.H."/>
            <person name="Lehmann R."/>
            <person name="Baumgart C."/>
            <person name="Parra G."/>
            <person name="Abril J.F."/>
            <person name="Guigo R."/>
            <person name="Kumpf K."/>
            <person name="Tunggal B."/>
            <person name="Cox E.C."/>
            <person name="Quail M.A."/>
            <person name="Platzer M."/>
            <person name="Rosenthal A."/>
            <person name="Noegel A.A."/>
        </authorList>
    </citation>
    <scope>NUCLEOTIDE SEQUENCE [LARGE SCALE GENOMIC DNA]</scope>
    <source>
        <strain>AX4</strain>
    </source>
</reference>
<reference key="2">
    <citation type="journal article" date="2005" name="Nature">
        <title>The genome of the social amoeba Dictyostelium discoideum.</title>
        <authorList>
            <person name="Eichinger L."/>
            <person name="Pachebat J.A."/>
            <person name="Gloeckner G."/>
            <person name="Rajandream M.A."/>
            <person name="Sucgang R."/>
            <person name="Berriman M."/>
            <person name="Song J."/>
            <person name="Olsen R."/>
            <person name="Szafranski K."/>
            <person name="Xu Q."/>
            <person name="Tunggal B."/>
            <person name="Kummerfeld S."/>
            <person name="Madera M."/>
            <person name="Konfortov B.A."/>
            <person name="Rivero F."/>
            <person name="Bankier A.T."/>
            <person name="Lehmann R."/>
            <person name="Hamlin N."/>
            <person name="Davies R."/>
            <person name="Gaudet P."/>
            <person name="Fey P."/>
            <person name="Pilcher K."/>
            <person name="Chen G."/>
            <person name="Saunders D."/>
            <person name="Sodergren E.J."/>
            <person name="Davis P."/>
            <person name="Kerhornou A."/>
            <person name="Nie X."/>
            <person name="Hall N."/>
            <person name="Anjard C."/>
            <person name="Hemphill L."/>
            <person name="Bason N."/>
            <person name="Farbrother P."/>
            <person name="Desany B."/>
            <person name="Just E."/>
            <person name="Morio T."/>
            <person name="Rost R."/>
            <person name="Churcher C.M."/>
            <person name="Cooper J."/>
            <person name="Haydock S."/>
            <person name="van Driessche N."/>
            <person name="Cronin A."/>
            <person name="Goodhead I."/>
            <person name="Muzny D.M."/>
            <person name="Mourier T."/>
            <person name="Pain A."/>
            <person name="Lu M."/>
            <person name="Harper D."/>
            <person name="Lindsay R."/>
            <person name="Hauser H."/>
            <person name="James K.D."/>
            <person name="Quiles M."/>
            <person name="Madan Babu M."/>
            <person name="Saito T."/>
            <person name="Buchrieser C."/>
            <person name="Wardroper A."/>
            <person name="Felder M."/>
            <person name="Thangavelu M."/>
            <person name="Johnson D."/>
            <person name="Knights A."/>
            <person name="Loulseged H."/>
            <person name="Mungall K.L."/>
            <person name="Oliver K."/>
            <person name="Price C."/>
            <person name="Quail M.A."/>
            <person name="Urushihara H."/>
            <person name="Hernandez J."/>
            <person name="Rabbinowitsch E."/>
            <person name="Steffen D."/>
            <person name="Sanders M."/>
            <person name="Ma J."/>
            <person name="Kohara Y."/>
            <person name="Sharp S."/>
            <person name="Simmonds M.N."/>
            <person name="Spiegler S."/>
            <person name="Tivey A."/>
            <person name="Sugano S."/>
            <person name="White B."/>
            <person name="Walker D."/>
            <person name="Woodward J.R."/>
            <person name="Winckler T."/>
            <person name="Tanaka Y."/>
            <person name="Shaulsky G."/>
            <person name="Schleicher M."/>
            <person name="Weinstock G.M."/>
            <person name="Rosenthal A."/>
            <person name="Cox E.C."/>
            <person name="Chisholm R.L."/>
            <person name="Gibbs R.A."/>
            <person name="Loomis W.F."/>
            <person name="Platzer M."/>
            <person name="Kay R.R."/>
            <person name="Williams J.G."/>
            <person name="Dear P.H."/>
            <person name="Noegel A.A."/>
            <person name="Barrell B.G."/>
            <person name="Kuspa A."/>
        </authorList>
    </citation>
    <scope>NUCLEOTIDE SEQUENCE [LARGE SCALE GENOMIC DNA]</scope>
    <source>
        <strain>AX4</strain>
    </source>
</reference>
<reference key="3">
    <citation type="journal article" date="2006" name="Eur. J. Cell Biol.">
        <title>Identification and isolation of Dictyostelium microtubule-associated protein interactors by tandem affinity purification.</title>
        <authorList>
            <person name="Koch K.V."/>
            <person name="Reinders Y."/>
            <person name="Ho T.-H."/>
            <person name="Sickmann A."/>
            <person name="Graef R."/>
        </authorList>
    </citation>
    <scope>IDENTIFICATION BY MASS SPECTROMETRY [LARGE SCALE ANALYSIS]</scope>
    <source>
        <strain>AX2</strain>
    </source>
</reference>
<feature type="chain" id="PRO_0000328752" description="Twinfilin">
    <location>
        <begin position="1"/>
        <end position="335"/>
    </location>
</feature>
<feature type="domain" description="ADF-H 1" evidence="2">
    <location>
        <begin position="4"/>
        <end position="140"/>
    </location>
</feature>
<feature type="domain" description="ADF-H 2" evidence="2">
    <location>
        <begin position="176"/>
        <end position="316"/>
    </location>
</feature>
<feature type="region of interest" description="Disordered" evidence="3">
    <location>
        <begin position="307"/>
        <end position="335"/>
    </location>
</feature>
<feature type="compositionally biased region" description="Basic and acidic residues" evidence="3">
    <location>
        <begin position="316"/>
        <end position="325"/>
    </location>
</feature>
<comment type="function">
    <text evidence="1">Actin-binding protein involved in motile and morphological processes. Inhibits actin polymerization, likely by sequestering G-actin (By similarity).</text>
</comment>
<comment type="subunit">
    <text evidence="1">Interacts with G-actin; ADP-actin form.</text>
</comment>
<comment type="subcellular location">
    <subcellularLocation>
        <location evidence="1">Cytoplasm</location>
        <location evidence="1">Cytoskeleton</location>
    </subcellularLocation>
    <subcellularLocation>
        <location evidence="1">Cytoplasm</location>
        <location evidence="1">Cell cortex</location>
    </subcellularLocation>
</comment>
<comment type="similarity">
    <text evidence="4">Belongs to the actin-binding proteins ADF family. Twinfilin subfamily.</text>
</comment>